<reference key="1">
    <citation type="journal article" date="2012" name="BMC Genomics">
        <title>Comparative genomics and transcriptomics of lineages I, II, and III strains of Listeria monocytogenes.</title>
        <authorList>
            <person name="Hain T."/>
            <person name="Ghai R."/>
            <person name="Billion A."/>
            <person name="Kuenne C.T."/>
            <person name="Steinweg C."/>
            <person name="Izar B."/>
            <person name="Mohamed W."/>
            <person name="Mraheil M."/>
            <person name="Domann E."/>
            <person name="Schaffrath S."/>
            <person name="Karst U."/>
            <person name="Goesmann A."/>
            <person name="Oehm S."/>
            <person name="Puhler A."/>
            <person name="Merkl R."/>
            <person name="Vorwerk S."/>
            <person name="Glaser P."/>
            <person name="Garrido P."/>
            <person name="Rusniok C."/>
            <person name="Buchrieser C."/>
            <person name="Goebel W."/>
            <person name="Chakraborty T."/>
        </authorList>
    </citation>
    <scope>NUCLEOTIDE SEQUENCE [LARGE SCALE GENOMIC DNA]</scope>
    <source>
        <strain>CLIP80459</strain>
    </source>
</reference>
<sequence>MNQIEKTGELSASRFTVRDFTELVKIGIVNSNTITAFTGMWLAFQLNGISFIQNVDVIFFTIVGSALIVAASGAFNNVIDRDIDGIMERTKNRPTMTGKISGKRALMVALVLGVVGTIMLFMTTWQAGVLGVIGVFLYVVVYSLYAKRKLVSNTVIGSFSGAVPPLIGWFAVEPSFSIVPIMLFLVMFCWQPPHFYAIAIKRKEEYAAAGIPMLPVVKGIERTKKSMFFWVILLTILPFFMFELGIVYVVLATLLNIGWLALSIYGFKMEDSIKWAKWMFVYSLNYMTILFVAMVVISIFL</sequence>
<protein>
    <recommendedName>
        <fullName evidence="1">Protoheme IX farnesyltransferase</fullName>
        <ecNumber evidence="1">2.5.1.141</ecNumber>
    </recommendedName>
    <alternativeName>
        <fullName evidence="1">Heme B farnesyltransferase</fullName>
    </alternativeName>
    <alternativeName>
        <fullName evidence="1">Heme O synthase</fullName>
    </alternativeName>
</protein>
<keyword id="KW-1003">Cell membrane</keyword>
<keyword id="KW-0350">Heme biosynthesis</keyword>
<keyword id="KW-0472">Membrane</keyword>
<keyword id="KW-0808">Transferase</keyword>
<keyword id="KW-0812">Transmembrane</keyword>
<keyword id="KW-1133">Transmembrane helix</keyword>
<gene>
    <name evidence="1" type="primary">ctaB</name>
    <name type="ordered locus">Lm4b_02078</name>
</gene>
<proteinExistence type="inferred from homology"/>
<name>COXX_LISMC</name>
<comment type="function">
    <text evidence="1">Converts heme B (protoheme IX) to heme O by substitution of the vinyl group on carbon 2 of heme B porphyrin ring with a hydroxyethyl farnesyl side group.</text>
</comment>
<comment type="catalytic activity">
    <reaction evidence="1">
        <text>heme b + (2E,6E)-farnesyl diphosphate + H2O = Fe(II)-heme o + diphosphate</text>
        <dbReference type="Rhea" id="RHEA:28070"/>
        <dbReference type="ChEBI" id="CHEBI:15377"/>
        <dbReference type="ChEBI" id="CHEBI:33019"/>
        <dbReference type="ChEBI" id="CHEBI:60344"/>
        <dbReference type="ChEBI" id="CHEBI:60530"/>
        <dbReference type="ChEBI" id="CHEBI:175763"/>
        <dbReference type="EC" id="2.5.1.141"/>
    </reaction>
</comment>
<comment type="pathway">
    <text evidence="1">Porphyrin-containing compound metabolism; heme O biosynthesis; heme O from protoheme: step 1/1.</text>
</comment>
<comment type="subunit">
    <text evidence="1">Interacts with CtaA.</text>
</comment>
<comment type="subcellular location">
    <subcellularLocation>
        <location evidence="1">Cell membrane</location>
        <topology evidence="1">Multi-pass membrane protein</topology>
    </subcellularLocation>
</comment>
<comment type="miscellaneous">
    <text evidence="1">Carbon 2 of the heme B porphyrin ring is defined according to the Fischer nomenclature.</text>
</comment>
<comment type="similarity">
    <text evidence="1">Belongs to the UbiA prenyltransferase family. Protoheme IX farnesyltransferase subfamily.</text>
</comment>
<accession>C1KX10</accession>
<dbReference type="EC" id="2.5.1.141" evidence="1"/>
<dbReference type="EMBL" id="FM242711">
    <property type="protein sequence ID" value="CAS05837.1"/>
    <property type="molecule type" value="Genomic_DNA"/>
</dbReference>
<dbReference type="SMR" id="C1KX10"/>
<dbReference type="KEGG" id="lmc:Lm4b_02078"/>
<dbReference type="HOGENOM" id="CLU_029631_0_0_9"/>
<dbReference type="UniPathway" id="UPA00834">
    <property type="reaction ID" value="UER00712"/>
</dbReference>
<dbReference type="GO" id="GO:0005886">
    <property type="term" value="C:plasma membrane"/>
    <property type="evidence" value="ECO:0007669"/>
    <property type="project" value="UniProtKB-SubCell"/>
</dbReference>
<dbReference type="GO" id="GO:0008495">
    <property type="term" value="F:protoheme IX farnesyltransferase activity"/>
    <property type="evidence" value="ECO:0007669"/>
    <property type="project" value="UniProtKB-UniRule"/>
</dbReference>
<dbReference type="GO" id="GO:0048034">
    <property type="term" value="P:heme O biosynthetic process"/>
    <property type="evidence" value="ECO:0007669"/>
    <property type="project" value="UniProtKB-UniRule"/>
</dbReference>
<dbReference type="CDD" id="cd13957">
    <property type="entry name" value="PT_UbiA_Cox10"/>
    <property type="match status" value="1"/>
</dbReference>
<dbReference type="FunFam" id="1.10.357.140:FF:000001">
    <property type="entry name" value="Protoheme IX farnesyltransferase"/>
    <property type="match status" value="1"/>
</dbReference>
<dbReference type="Gene3D" id="1.10.357.140">
    <property type="entry name" value="UbiA prenyltransferase"/>
    <property type="match status" value="1"/>
</dbReference>
<dbReference type="HAMAP" id="MF_00154">
    <property type="entry name" value="CyoE_CtaB"/>
    <property type="match status" value="1"/>
</dbReference>
<dbReference type="InterPro" id="IPR006369">
    <property type="entry name" value="Protohaem_IX_farnesylTrfase"/>
</dbReference>
<dbReference type="InterPro" id="IPR000537">
    <property type="entry name" value="UbiA_prenyltransferase"/>
</dbReference>
<dbReference type="InterPro" id="IPR030470">
    <property type="entry name" value="UbiA_prenylTrfase_CS"/>
</dbReference>
<dbReference type="InterPro" id="IPR044878">
    <property type="entry name" value="UbiA_sf"/>
</dbReference>
<dbReference type="NCBIfam" id="TIGR01473">
    <property type="entry name" value="cyoE_ctaB"/>
    <property type="match status" value="1"/>
</dbReference>
<dbReference type="PANTHER" id="PTHR43448">
    <property type="entry name" value="PROTOHEME IX FARNESYLTRANSFERASE, MITOCHONDRIAL"/>
    <property type="match status" value="1"/>
</dbReference>
<dbReference type="PANTHER" id="PTHR43448:SF2">
    <property type="entry name" value="PROTOHEME IX FARNESYLTRANSFERASE, MITOCHONDRIAL"/>
    <property type="match status" value="1"/>
</dbReference>
<dbReference type="Pfam" id="PF01040">
    <property type="entry name" value="UbiA"/>
    <property type="match status" value="1"/>
</dbReference>
<dbReference type="PROSITE" id="PS00943">
    <property type="entry name" value="UBIA"/>
    <property type="match status" value="1"/>
</dbReference>
<feature type="chain" id="PRO_1000203454" description="Protoheme IX farnesyltransferase">
    <location>
        <begin position="1"/>
        <end position="301"/>
    </location>
</feature>
<feature type="transmembrane region" description="Helical" evidence="1">
    <location>
        <begin position="20"/>
        <end position="42"/>
    </location>
</feature>
<feature type="transmembrane region" description="Helical" evidence="1">
    <location>
        <begin position="55"/>
        <end position="75"/>
    </location>
</feature>
<feature type="transmembrane region" description="Helical" evidence="1">
    <location>
        <begin position="105"/>
        <end position="125"/>
    </location>
</feature>
<feature type="transmembrane region" description="Helical" evidence="1">
    <location>
        <begin position="126"/>
        <end position="146"/>
    </location>
</feature>
<feature type="transmembrane region" description="Helical" evidence="1">
    <location>
        <begin position="150"/>
        <end position="172"/>
    </location>
</feature>
<feature type="transmembrane region" description="Helical" evidence="1">
    <location>
        <begin position="176"/>
        <end position="198"/>
    </location>
</feature>
<feature type="transmembrane region" description="Helical" evidence="1">
    <location>
        <begin position="227"/>
        <end position="247"/>
    </location>
</feature>
<feature type="transmembrane region" description="Helical" evidence="1">
    <location>
        <begin position="249"/>
        <end position="269"/>
    </location>
</feature>
<feature type="transmembrane region" description="Helical" evidence="1">
    <location>
        <begin position="280"/>
        <end position="300"/>
    </location>
</feature>
<evidence type="ECO:0000255" key="1">
    <source>
        <dbReference type="HAMAP-Rule" id="MF_00154"/>
    </source>
</evidence>
<organism>
    <name type="scientific">Listeria monocytogenes serotype 4b (strain CLIP80459)</name>
    <dbReference type="NCBI Taxonomy" id="568819"/>
    <lineage>
        <taxon>Bacteria</taxon>
        <taxon>Bacillati</taxon>
        <taxon>Bacillota</taxon>
        <taxon>Bacilli</taxon>
        <taxon>Bacillales</taxon>
        <taxon>Listeriaceae</taxon>
        <taxon>Listeria</taxon>
    </lineage>
</organism>